<sequence length="128" mass="14394">MEVVNAIGRRKAAVARVFVSEGTGKITINKRELEKYFPSSILQFIVKQPLAKLNVAEQYDIKINLDGGGFKGQSEAARLAISRALIKINPEDKAVLRAEGFVTRDPRAVERKKPGRPKARKRFQFSKR</sequence>
<feature type="chain" id="PRO_1000128148" description="Small ribosomal subunit protein uS9">
    <location>
        <begin position="1"/>
        <end position="128"/>
    </location>
</feature>
<feature type="region of interest" description="Disordered" evidence="2">
    <location>
        <begin position="107"/>
        <end position="128"/>
    </location>
</feature>
<feature type="compositionally biased region" description="Basic residues" evidence="2">
    <location>
        <begin position="113"/>
        <end position="128"/>
    </location>
</feature>
<protein>
    <recommendedName>
        <fullName evidence="1">Small ribosomal subunit protein uS9</fullName>
    </recommendedName>
    <alternativeName>
        <fullName evidence="3">30S ribosomal protein S9</fullName>
    </alternativeName>
</protein>
<name>RS9_PARD8</name>
<gene>
    <name evidence="1" type="primary">rpsI</name>
    <name type="ordered locus">BDI_3488</name>
</gene>
<organism>
    <name type="scientific">Parabacteroides distasonis (strain ATCC 8503 / DSM 20701 / CIP 104284 / JCM 5825 / NCTC 11152)</name>
    <dbReference type="NCBI Taxonomy" id="435591"/>
    <lineage>
        <taxon>Bacteria</taxon>
        <taxon>Pseudomonadati</taxon>
        <taxon>Bacteroidota</taxon>
        <taxon>Bacteroidia</taxon>
        <taxon>Bacteroidales</taxon>
        <taxon>Tannerellaceae</taxon>
        <taxon>Parabacteroides</taxon>
    </lineage>
</organism>
<evidence type="ECO:0000255" key="1">
    <source>
        <dbReference type="HAMAP-Rule" id="MF_00532"/>
    </source>
</evidence>
<evidence type="ECO:0000256" key="2">
    <source>
        <dbReference type="SAM" id="MobiDB-lite"/>
    </source>
</evidence>
<evidence type="ECO:0000305" key="3"/>
<comment type="similarity">
    <text evidence="1">Belongs to the universal ribosomal protein uS9 family.</text>
</comment>
<keyword id="KW-1185">Reference proteome</keyword>
<keyword id="KW-0687">Ribonucleoprotein</keyword>
<keyword id="KW-0689">Ribosomal protein</keyword>
<proteinExistence type="inferred from homology"/>
<dbReference type="EMBL" id="CP000140">
    <property type="protein sequence ID" value="ABR45190.1"/>
    <property type="molecule type" value="Genomic_DNA"/>
</dbReference>
<dbReference type="RefSeq" id="WP_005859484.1">
    <property type="nucleotide sequence ID" value="NZ_LR215978.1"/>
</dbReference>
<dbReference type="SMR" id="A6LHM6"/>
<dbReference type="STRING" id="435591.BDI_3488"/>
<dbReference type="PaxDb" id="435591-BDI_3488"/>
<dbReference type="GeneID" id="93523548"/>
<dbReference type="KEGG" id="pdi:BDI_3488"/>
<dbReference type="eggNOG" id="COG0103">
    <property type="taxonomic scope" value="Bacteria"/>
</dbReference>
<dbReference type="HOGENOM" id="CLU_046483_2_1_10"/>
<dbReference type="BioCyc" id="PDIS435591:G1G5A-3578-MONOMER"/>
<dbReference type="Proteomes" id="UP000000566">
    <property type="component" value="Chromosome"/>
</dbReference>
<dbReference type="GO" id="GO:0022627">
    <property type="term" value="C:cytosolic small ribosomal subunit"/>
    <property type="evidence" value="ECO:0007669"/>
    <property type="project" value="TreeGrafter"/>
</dbReference>
<dbReference type="GO" id="GO:0003723">
    <property type="term" value="F:RNA binding"/>
    <property type="evidence" value="ECO:0007669"/>
    <property type="project" value="TreeGrafter"/>
</dbReference>
<dbReference type="GO" id="GO:0003735">
    <property type="term" value="F:structural constituent of ribosome"/>
    <property type="evidence" value="ECO:0007669"/>
    <property type="project" value="InterPro"/>
</dbReference>
<dbReference type="GO" id="GO:0006412">
    <property type="term" value="P:translation"/>
    <property type="evidence" value="ECO:0007669"/>
    <property type="project" value="UniProtKB-UniRule"/>
</dbReference>
<dbReference type="FunFam" id="3.30.230.10:FF:000001">
    <property type="entry name" value="30S ribosomal protein S9"/>
    <property type="match status" value="1"/>
</dbReference>
<dbReference type="Gene3D" id="3.30.230.10">
    <property type="match status" value="1"/>
</dbReference>
<dbReference type="HAMAP" id="MF_00532_B">
    <property type="entry name" value="Ribosomal_uS9_B"/>
    <property type="match status" value="1"/>
</dbReference>
<dbReference type="InterPro" id="IPR020568">
    <property type="entry name" value="Ribosomal_Su5_D2-typ_SF"/>
</dbReference>
<dbReference type="InterPro" id="IPR000754">
    <property type="entry name" value="Ribosomal_uS9"/>
</dbReference>
<dbReference type="InterPro" id="IPR023035">
    <property type="entry name" value="Ribosomal_uS9_bac/plastid"/>
</dbReference>
<dbReference type="InterPro" id="IPR020574">
    <property type="entry name" value="Ribosomal_uS9_CS"/>
</dbReference>
<dbReference type="InterPro" id="IPR014721">
    <property type="entry name" value="Ribsml_uS5_D2-typ_fold_subgr"/>
</dbReference>
<dbReference type="NCBIfam" id="NF001099">
    <property type="entry name" value="PRK00132.1"/>
    <property type="match status" value="1"/>
</dbReference>
<dbReference type="PANTHER" id="PTHR21569">
    <property type="entry name" value="RIBOSOMAL PROTEIN S9"/>
    <property type="match status" value="1"/>
</dbReference>
<dbReference type="PANTHER" id="PTHR21569:SF1">
    <property type="entry name" value="SMALL RIBOSOMAL SUBUNIT PROTEIN US9M"/>
    <property type="match status" value="1"/>
</dbReference>
<dbReference type="Pfam" id="PF00380">
    <property type="entry name" value="Ribosomal_S9"/>
    <property type="match status" value="1"/>
</dbReference>
<dbReference type="SUPFAM" id="SSF54211">
    <property type="entry name" value="Ribosomal protein S5 domain 2-like"/>
    <property type="match status" value="1"/>
</dbReference>
<dbReference type="PROSITE" id="PS00360">
    <property type="entry name" value="RIBOSOMAL_S9"/>
    <property type="match status" value="1"/>
</dbReference>
<accession>A6LHM6</accession>
<reference key="1">
    <citation type="journal article" date="2007" name="PLoS Biol.">
        <title>Evolution of symbiotic bacteria in the distal human intestine.</title>
        <authorList>
            <person name="Xu J."/>
            <person name="Mahowald M.A."/>
            <person name="Ley R.E."/>
            <person name="Lozupone C.A."/>
            <person name="Hamady M."/>
            <person name="Martens E.C."/>
            <person name="Henrissat B."/>
            <person name="Coutinho P.M."/>
            <person name="Minx P."/>
            <person name="Latreille P."/>
            <person name="Cordum H."/>
            <person name="Van Brunt A."/>
            <person name="Kim K."/>
            <person name="Fulton R.S."/>
            <person name="Fulton L.A."/>
            <person name="Clifton S.W."/>
            <person name="Wilson R.K."/>
            <person name="Knight R.D."/>
            <person name="Gordon J.I."/>
        </authorList>
    </citation>
    <scope>NUCLEOTIDE SEQUENCE [LARGE SCALE GENOMIC DNA]</scope>
    <source>
        <strain>ATCC 8503 / DSM 20701 / CIP 104284 / JCM 5825 / NCTC 11152</strain>
    </source>
</reference>